<gene>
    <name type="primary">evgA</name>
    <name type="ordered locus">c2905</name>
</gene>
<evidence type="ECO:0000250" key="1"/>
<evidence type="ECO:0000255" key="2">
    <source>
        <dbReference type="PROSITE-ProRule" id="PRU00169"/>
    </source>
</evidence>
<evidence type="ECO:0000255" key="3">
    <source>
        <dbReference type="PROSITE-ProRule" id="PRU00411"/>
    </source>
</evidence>
<evidence type="ECO:0000305" key="4"/>
<dbReference type="EMBL" id="AE014075">
    <property type="protein sequence ID" value="AAN81355.1"/>
    <property type="molecule type" value="Genomic_DNA"/>
</dbReference>
<dbReference type="RefSeq" id="WP_000991370.1">
    <property type="nucleotide sequence ID" value="NZ_CP051263.1"/>
</dbReference>
<dbReference type="SMR" id="P0ACZ5"/>
<dbReference type="STRING" id="199310.c2905"/>
<dbReference type="GeneID" id="75202562"/>
<dbReference type="KEGG" id="ecc:c2905"/>
<dbReference type="eggNOG" id="COG2197">
    <property type="taxonomic scope" value="Bacteria"/>
</dbReference>
<dbReference type="HOGENOM" id="CLU_000445_90_1_6"/>
<dbReference type="BioCyc" id="ECOL199310:C2905-MONOMER"/>
<dbReference type="Proteomes" id="UP000001410">
    <property type="component" value="Chromosome"/>
</dbReference>
<dbReference type="GO" id="GO:0005737">
    <property type="term" value="C:cytoplasm"/>
    <property type="evidence" value="ECO:0007669"/>
    <property type="project" value="UniProtKB-SubCell"/>
</dbReference>
<dbReference type="GO" id="GO:0003677">
    <property type="term" value="F:DNA binding"/>
    <property type="evidence" value="ECO:0007669"/>
    <property type="project" value="UniProtKB-KW"/>
</dbReference>
<dbReference type="GO" id="GO:0000160">
    <property type="term" value="P:phosphorelay signal transduction system"/>
    <property type="evidence" value="ECO:0007669"/>
    <property type="project" value="UniProtKB-KW"/>
</dbReference>
<dbReference type="GO" id="GO:0006355">
    <property type="term" value="P:regulation of DNA-templated transcription"/>
    <property type="evidence" value="ECO:0007669"/>
    <property type="project" value="InterPro"/>
</dbReference>
<dbReference type="CDD" id="cd06170">
    <property type="entry name" value="LuxR_C_like"/>
    <property type="match status" value="1"/>
</dbReference>
<dbReference type="CDD" id="cd17535">
    <property type="entry name" value="REC_NarL-like"/>
    <property type="match status" value="1"/>
</dbReference>
<dbReference type="Gene3D" id="3.40.50.2300">
    <property type="match status" value="1"/>
</dbReference>
<dbReference type="Gene3D" id="1.10.10.10">
    <property type="entry name" value="Winged helix-like DNA-binding domain superfamily/Winged helix DNA-binding domain"/>
    <property type="match status" value="1"/>
</dbReference>
<dbReference type="InterPro" id="IPR011006">
    <property type="entry name" value="CheY-like_superfamily"/>
</dbReference>
<dbReference type="InterPro" id="IPR051015">
    <property type="entry name" value="RcsB_transcriptional_reg"/>
</dbReference>
<dbReference type="InterPro" id="IPR016032">
    <property type="entry name" value="Sig_transdc_resp-reg_C-effctor"/>
</dbReference>
<dbReference type="InterPro" id="IPR001789">
    <property type="entry name" value="Sig_transdc_resp-reg_receiver"/>
</dbReference>
<dbReference type="InterPro" id="IPR000792">
    <property type="entry name" value="Tscrpt_reg_LuxR_C"/>
</dbReference>
<dbReference type="InterPro" id="IPR036388">
    <property type="entry name" value="WH-like_DNA-bd_sf"/>
</dbReference>
<dbReference type="NCBIfam" id="NF007419">
    <property type="entry name" value="PRK09958.1"/>
    <property type="match status" value="1"/>
</dbReference>
<dbReference type="PANTHER" id="PTHR45566">
    <property type="entry name" value="HTH-TYPE TRANSCRIPTIONAL REGULATOR YHJB-RELATED"/>
    <property type="match status" value="1"/>
</dbReference>
<dbReference type="PANTHER" id="PTHR45566:SF2">
    <property type="entry name" value="NARL SUBFAMILY"/>
    <property type="match status" value="1"/>
</dbReference>
<dbReference type="Pfam" id="PF00196">
    <property type="entry name" value="GerE"/>
    <property type="match status" value="1"/>
</dbReference>
<dbReference type="Pfam" id="PF00072">
    <property type="entry name" value="Response_reg"/>
    <property type="match status" value="1"/>
</dbReference>
<dbReference type="PRINTS" id="PR00038">
    <property type="entry name" value="HTHLUXR"/>
</dbReference>
<dbReference type="SMART" id="SM00421">
    <property type="entry name" value="HTH_LUXR"/>
    <property type="match status" value="1"/>
</dbReference>
<dbReference type="SMART" id="SM00448">
    <property type="entry name" value="REC"/>
    <property type="match status" value="1"/>
</dbReference>
<dbReference type="SUPFAM" id="SSF46894">
    <property type="entry name" value="C-terminal effector domain of the bipartite response regulators"/>
    <property type="match status" value="1"/>
</dbReference>
<dbReference type="SUPFAM" id="SSF52172">
    <property type="entry name" value="CheY-like"/>
    <property type="match status" value="1"/>
</dbReference>
<dbReference type="PROSITE" id="PS00622">
    <property type="entry name" value="HTH_LUXR_1"/>
    <property type="match status" value="1"/>
</dbReference>
<dbReference type="PROSITE" id="PS50043">
    <property type="entry name" value="HTH_LUXR_2"/>
    <property type="match status" value="1"/>
</dbReference>
<dbReference type="PROSITE" id="PS50110">
    <property type="entry name" value="RESPONSE_REGULATORY"/>
    <property type="match status" value="1"/>
</dbReference>
<protein>
    <recommendedName>
        <fullName evidence="4">DNA-binding transcriptional activator EvgA</fullName>
    </recommendedName>
</protein>
<proteinExistence type="inferred from homology"/>
<comment type="function">
    <text evidence="1">Member of the two-component regulatory system EvgS/EvgA. Regulates the expression of emrKY operon and yfdX. Also seems to control expression of at least one other multidrug efflux operon (By similarity).</text>
</comment>
<comment type="subunit">
    <text evidence="1">Homodimer.</text>
</comment>
<comment type="subcellular location">
    <subcellularLocation>
        <location evidence="1">Cytoplasm</location>
    </subcellularLocation>
</comment>
<comment type="PTM">
    <text evidence="1">Phosphorylated by EvgS.</text>
</comment>
<sequence length="204" mass="22690">MNAIIIDDHPLAIAAIRNLLIKNDIEILAELTEGGSAVQRVETLKPDIVIIDVDIPGVNGIQVLETLRKRQYSGIIIIVSAKNDHFYGKHCADAGANGFVSKKEGMNNIIAAIEAAKNGYCYFPFSLNRFVGSLTSDQQKLDSLSKQEISVMRYILDGKDNNDIAEKMFISNKTVSTYKSRLMEKLECKSLMDLYTFAQRNKIG</sequence>
<organism>
    <name type="scientific">Escherichia coli O6:H1 (strain CFT073 / ATCC 700928 / UPEC)</name>
    <dbReference type="NCBI Taxonomy" id="199310"/>
    <lineage>
        <taxon>Bacteria</taxon>
        <taxon>Pseudomonadati</taxon>
        <taxon>Pseudomonadota</taxon>
        <taxon>Gammaproteobacteria</taxon>
        <taxon>Enterobacterales</taxon>
        <taxon>Enterobacteriaceae</taxon>
        <taxon>Escherichia</taxon>
    </lineage>
</organism>
<name>EVGA_ECOL6</name>
<keyword id="KW-0010">Activator</keyword>
<keyword id="KW-0963">Cytoplasm</keyword>
<keyword id="KW-0238">DNA-binding</keyword>
<keyword id="KW-0597">Phosphoprotein</keyword>
<keyword id="KW-1185">Reference proteome</keyword>
<keyword id="KW-0804">Transcription</keyword>
<keyword id="KW-0805">Transcription regulation</keyword>
<keyword id="KW-0902">Two-component regulatory system</keyword>
<feature type="chain" id="PRO_0000081037" description="DNA-binding transcriptional activator EvgA">
    <location>
        <begin position="1"/>
        <end position="204"/>
    </location>
</feature>
<feature type="domain" description="Response regulatory" evidence="2">
    <location>
        <begin position="2"/>
        <end position="117"/>
    </location>
</feature>
<feature type="domain" description="HTH luxR-type" evidence="3">
    <location>
        <begin position="137"/>
        <end position="202"/>
    </location>
</feature>
<feature type="DNA-binding region" description="H-T-H motif" evidence="3">
    <location>
        <begin position="161"/>
        <end position="180"/>
    </location>
</feature>
<feature type="modified residue" description="4-aspartylphosphate" evidence="2">
    <location>
        <position position="52"/>
    </location>
</feature>
<reference key="1">
    <citation type="journal article" date="2002" name="Proc. Natl. Acad. Sci. U.S.A.">
        <title>Extensive mosaic structure revealed by the complete genome sequence of uropathogenic Escherichia coli.</title>
        <authorList>
            <person name="Welch R.A."/>
            <person name="Burland V."/>
            <person name="Plunkett G. III"/>
            <person name="Redford P."/>
            <person name="Roesch P."/>
            <person name="Rasko D."/>
            <person name="Buckles E.L."/>
            <person name="Liou S.-R."/>
            <person name="Boutin A."/>
            <person name="Hackett J."/>
            <person name="Stroud D."/>
            <person name="Mayhew G.F."/>
            <person name="Rose D.J."/>
            <person name="Zhou S."/>
            <person name="Schwartz D.C."/>
            <person name="Perna N.T."/>
            <person name="Mobley H.L.T."/>
            <person name="Donnenberg M.S."/>
            <person name="Blattner F.R."/>
        </authorList>
    </citation>
    <scope>NUCLEOTIDE SEQUENCE [LARGE SCALE GENOMIC DNA]</scope>
    <source>
        <strain>CFT073 / ATCC 700928 / UPEC</strain>
    </source>
</reference>
<accession>P0ACZ5</accession>
<accession>P30854</accession>